<accession>Q1LXK4</accession>
<keyword id="KW-0067">ATP-binding</keyword>
<keyword id="KW-0963">Cytoplasm</keyword>
<keyword id="KW-0347">Helicase</keyword>
<keyword id="KW-0378">Hydrolase</keyword>
<keyword id="KW-0547">Nucleotide-binding</keyword>
<keyword id="KW-1185">Reference proteome</keyword>
<keyword id="KW-0694">RNA-binding</keyword>
<keyword id="KW-0943">RNA-mediated gene silencing</keyword>
<gene>
    <name type="primary">mov10b.1</name>
    <name type="ORF">si:dkeyp-38g6.2</name>
</gene>
<proteinExistence type="evidence at transcript level"/>
<feature type="chain" id="PRO_0000374668" description="Putative helicase mov-10-B.1">
    <location>
        <begin position="1"/>
        <end position="1013"/>
    </location>
</feature>
<feature type="region of interest" description="Disordered" evidence="2">
    <location>
        <begin position="91"/>
        <end position="129"/>
    </location>
</feature>
<feature type="short sequence motif" description="DEAG box">
    <location>
        <begin position="672"/>
        <end position="675"/>
    </location>
</feature>
<feature type="compositionally biased region" description="Polar residues" evidence="2">
    <location>
        <begin position="91"/>
        <end position="103"/>
    </location>
</feature>
<feature type="compositionally biased region" description="Polar residues" evidence="2">
    <location>
        <begin position="113"/>
        <end position="123"/>
    </location>
</feature>
<feature type="binding site" evidence="1">
    <location>
        <begin position="550"/>
        <end position="557"/>
    </location>
    <ligand>
        <name>ATP</name>
        <dbReference type="ChEBI" id="CHEBI:30616"/>
    </ligand>
</feature>
<organism>
    <name type="scientific">Danio rerio</name>
    <name type="common">Zebrafish</name>
    <name type="synonym">Brachydanio rerio</name>
    <dbReference type="NCBI Taxonomy" id="7955"/>
    <lineage>
        <taxon>Eukaryota</taxon>
        <taxon>Metazoa</taxon>
        <taxon>Chordata</taxon>
        <taxon>Craniata</taxon>
        <taxon>Vertebrata</taxon>
        <taxon>Euteleostomi</taxon>
        <taxon>Actinopterygii</taxon>
        <taxon>Neopterygii</taxon>
        <taxon>Teleostei</taxon>
        <taxon>Ostariophysi</taxon>
        <taxon>Cypriniformes</taxon>
        <taxon>Danionidae</taxon>
        <taxon>Danioninae</taxon>
        <taxon>Danio</taxon>
    </lineage>
</organism>
<evidence type="ECO:0000250" key="1"/>
<evidence type="ECO:0000256" key="2">
    <source>
        <dbReference type="SAM" id="MobiDB-lite"/>
    </source>
</evidence>
<evidence type="ECO:0000305" key="3"/>
<dbReference type="EC" id="3.6.4.13"/>
<dbReference type="EMBL" id="BX323059">
    <property type="protein sequence ID" value="CAK11382.2"/>
    <property type="molecule type" value="Genomic_DNA"/>
</dbReference>
<dbReference type="EMBL" id="BC171375">
    <property type="protein sequence ID" value="AAI71375.1"/>
    <property type="molecule type" value="mRNA"/>
</dbReference>
<dbReference type="RefSeq" id="NP_001037807.2">
    <property type="nucleotide sequence ID" value="NM_001044342.2"/>
</dbReference>
<dbReference type="SMR" id="Q1LXK4"/>
<dbReference type="FunCoup" id="Q1LXK4">
    <property type="interactions" value="710"/>
</dbReference>
<dbReference type="STRING" id="7955.ENSDARP00000081380"/>
<dbReference type="PaxDb" id="7955-ENSDARP00000081380"/>
<dbReference type="Ensembl" id="ENSDART00000086946">
    <property type="protein sequence ID" value="ENSDARP00000081380"/>
    <property type="gene ID" value="ENSDARG00000061177"/>
</dbReference>
<dbReference type="GeneID" id="556024"/>
<dbReference type="KEGG" id="dre:556024"/>
<dbReference type="AGR" id="ZFIN:ZDB-GENE-030131-9089"/>
<dbReference type="CTD" id="556024"/>
<dbReference type="ZFIN" id="ZDB-GENE-030131-9089">
    <property type="gene designation" value="mov10b.1"/>
</dbReference>
<dbReference type="eggNOG" id="KOG1804">
    <property type="taxonomic scope" value="Eukaryota"/>
</dbReference>
<dbReference type="HOGENOM" id="CLU_001666_6_1_1"/>
<dbReference type="InParanoid" id="Q1LXK4"/>
<dbReference type="OMA" id="NYCYESG"/>
<dbReference type="OrthoDB" id="6513042at2759"/>
<dbReference type="PhylomeDB" id="Q1LXK4"/>
<dbReference type="TreeFam" id="TF323999"/>
<dbReference type="PRO" id="PR:Q1LXK4"/>
<dbReference type="Proteomes" id="UP000000437">
    <property type="component" value="Alternate scaffold 8"/>
</dbReference>
<dbReference type="Proteomes" id="UP000000437">
    <property type="component" value="Chromosome 8"/>
</dbReference>
<dbReference type="Bgee" id="ENSDARG00000061177">
    <property type="expression patterns" value="Expressed in spleen and 17 other cell types or tissues"/>
</dbReference>
<dbReference type="GO" id="GO:0005829">
    <property type="term" value="C:cytosol"/>
    <property type="evidence" value="ECO:0000318"/>
    <property type="project" value="GO_Central"/>
</dbReference>
<dbReference type="GO" id="GO:0043186">
    <property type="term" value="C:P granule"/>
    <property type="evidence" value="ECO:0000318"/>
    <property type="project" value="GO_Central"/>
</dbReference>
<dbReference type="GO" id="GO:0000932">
    <property type="term" value="C:P-body"/>
    <property type="evidence" value="ECO:0000250"/>
    <property type="project" value="UniProtKB"/>
</dbReference>
<dbReference type="GO" id="GO:0032574">
    <property type="term" value="F:5'-3' RNA helicase activity"/>
    <property type="evidence" value="ECO:0007669"/>
    <property type="project" value="InterPro"/>
</dbReference>
<dbReference type="GO" id="GO:0005524">
    <property type="term" value="F:ATP binding"/>
    <property type="evidence" value="ECO:0007669"/>
    <property type="project" value="UniProtKB-KW"/>
</dbReference>
<dbReference type="GO" id="GO:0016887">
    <property type="term" value="F:ATP hydrolysis activity"/>
    <property type="evidence" value="ECO:0007669"/>
    <property type="project" value="InterPro"/>
</dbReference>
<dbReference type="GO" id="GO:0003723">
    <property type="term" value="F:RNA binding"/>
    <property type="evidence" value="ECO:0000318"/>
    <property type="project" value="GO_Central"/>
</dbReference>
<dbReference type="GO" id="GO:0035279">
    <property type="term" value="P:miRNA-mediated gene silencing by mRNA destabilization"/>
    <property type="evidence" value="ECO:0000250"/>
    <property type="project" value="UniProtKB"/>
</dbReference>
<dbReference type="GO" id="GO:0035194">
    <property type="term" value="P:regulatory ncRNA-mediated post-transcriptional gene silencing"/>
    <property type="evidence" value="ECO:0000318"/>
    <property type="project" value="GO_Central"/>
</dbReference>
<dbReference type="CDD" id="cd18038">
    <property type="entry name" value="DEXXQc_Helz-like"/>
    <property type="match status" value="1"/>
</dbReference>
<dbReference type="CDD" id="cd18808">
    <property type="entry name" value="SF1_C_Upf1"/>
    <property type="match status" value="1"/>
</dbReference>
<dbReference type="FunFam" id="3.40.50.300:FF:000608">
    <property type="entry name" value="Mov10 RISC complex RNA helicase"/>
    <property type="match status" value="1"/>
</dbReference>
<dbReference type="FunFam" id="3.40.50.300:FF:001941">
    <property type="entry name" value="Mov10 RISC complex RNA helicase"/>
    <property type="match status" value="1"/>
</dbReference>
<dbReference type="Gene3D" id="3.40.50.300">
    <property type="entry name" value="P-loop containing nucleotide triphosphate hydrolases"/>
    <property type="match status" value="2"/>
</dbReference>
<dbReference type="InterPro" id="IPR003593">
    <property type="entry name" value="AAA+_ATPase"/>
</dbReference>
<dbReference type="InterPro" id="IPR041679">
    <property type="entry name" value="DNA2/NAM7-like_C"/>
</dbReference>
<dbReference type="InterPro" id="IPR041677">
    <property type="entry name" value="DNA2/NAM7_AAA_11"/>
</dbReference>
<dbReference type="InterPro" id="IPR049080">
    <property type="entry name" value="MOV-10-like_beta-barrel"/>
</dbReference>
<dbReference type="InterPro" id="IPR026122">
    <property type="entry name" value="MOV-10/SDE3_DEXXQ/H-box"/>
</dbReference>
<dbReference type="InterPro" id="IPR049079">
    <property type="entry name" value="Mov-10_helical"/>
</dbReference>
<dbReference type="InterPro" id="IPR049077">
    <property type="entry name" value="MOV-10_Ig-like"/>
</dbReference>
<dbReference type="InterPro" id="IPR049075">
    <property type="entry name" value="MOV-10_N"/>
</dbReference>
<dbReference type="InterPro" id="IPR027417">
    <property type="entry name" value="P-loop_NTPase"/>
</dbReference>
<dbReference type="InterPro" id="IPR047187">
    <property type="entry name" value="SF1_C_Upf1"/>
</dbReference>
<dbReference type="PANTHER" id="PTHR45418:SF5">
    <property type="entry name" value="BRCA2-INTERACTING PROTEIN-LIKE-RELATED"/>
    <property type="match status" value="1"/>
</dbReference>
<dbReference type="PANTHER" id="PTHR45418">
    <property type="entry name" value="CANCER/TESTIS ANTIGEN 55"/>
    <property type="match status" value="1"/>
</dbReference>
<dbReference type="Pfam" id="PF13086">
    <property type="entry name" value="AAA_11"/>
    <property type="match status" value="2"/>
</dbReference>
<dbReference type="Pfam" id="PF13087">
    <property type="entry name" value="AAA_12"/>
    <property type="match status" value="1"/>
</dbReference>
<dbReference type="Pfam" id="PF21634">
    <property type="entry name" value="MOV-10_beta-barrel"/>
    <property type="match status" value="1"/>
</dbReference>
<dbReference type="Pfam" id="PF21635">
    <property type="entry name" value="Mov-10_helical"/>
    <property type="match status" value="1"/>
</dbReference>
<dbReference type="Pfam" id="PF21633">
    <property type="entry name" value="MOV-10_Ig-like"/>
    <property type="match status" value="1"/>
</dbReference>
<dbReference type="Pfam" id="PF21632">
    <property type="entry name" value="MOV-10_N"/>
    <property type="match status" value="1"/>
</dbReference>
<dbReference type="SMART" id="SM00382">
    <property type="entry name" value="AAA"/>
    <property type="match status" value="1"/>
</dbReference>
<dbReference type="SUPFAM" id="SSF52540">
    <property type="entry name" value="P-loop containing nucleoside triphosphate hydrolases"/>
    <property type="match status" value="1"/>
</dbReference>
<sequence length="1013" mass="116407">MSRKYRKKLSRDDIRAVGFDFIEFLDDRETRSTTDRNTLKEIYNEQFRDRDGVRDPNFSSVLFALTRSSRTRVTRSEVFFDKKIRVRQNDQWSRPYRSQQNHATPHLNDAISRPSTTRVSDPSSVPEPENRVIARRRLAKTIMRQGNSEDMSVFFADKYGVRVSSELQIEDGKIHWCVEGAEVHELKLFVENTGQEAILFTCFSALHYLQYFTLDDSQRVRKDNPHRLEPNETYEVILRFKSDQIGVYPATLAFEFKENQDTRPFHIVRFIEAQHRSELTAQLGPTEPFRPKRLDTNQPMKWSIDEGFKPESSSQNFLKFVVPLDNYNCPSYTSALIEVLKGNRSSGKQLQEHQLTLESDLSFNNYMDRFDLLLYLEEDQMRMDIKRYNKKDVSMVRDRDKKLLVLELPGVSENRPSVLRGDHLLLTKSEELQNSNVTKYKGYVHRVELDQVKLGFSKRLLERFIDNMKFSVEFTINRLPLRLQHRAVHMVVQHHLKDVLFPVASRRLNPVSPSALRLFDQKLEKNPEQKTAVCNIVAGTSKPAPYLVFGPPGTGKTVTIVEAIKQVEKNTGGARILACAPSNSAADQLGEKLITSQHVDARNIYRIYASSRNPKEIPKVLENNSNVEGENIIFPCKEDLMPYKIVVCTLVTAGRLVSGGFPVGHFSHIFVDEAGHAVEPEIVISVAGLLNAETGQLVLAGDPKQLGPILRSPFAIKYGLGLSLLERLMTQNELYQKGDTGFDNRYVTKLLQNYRSHPSILKVPNELFYDNELKACADEISSRQYCTWEHLPKRGFPVIFHGVVGKDERESTSPSFFNTSEIDKIMDYLKKLLLTQAKKGIAKISPKDIGIIAPYRKQVEKIRQAIKIHRELKSLSGIEELKVGSVEEFQGQERKVIIVSTVRSSKEHIILDDKFNIGFLKNEKRFNVAVTRAKALLIMVGNPIILRTDEIWGRFMNYCIQERGYTGYDITHLEETDVIAERLLSLNIRQEITVETEESVVQQFLSPPWRHEH</sequence>
<reference key="1">
    <citation type="journal article" date="2013" name="Nature">
        <title>The zebrafish reference genome sequence and its relationship to the human genome.</title>
        <authorList>
            <person name="Howe K."/>
            <person name="Clark M.D."/>
            <person name="Torroja C.F."/>
            <person name="Torrance J."/>
            <person name="Berthelot C."/>
            <person name="Muffato M."/>
            <person name="Collins J.E."/>
            <person name="Humphray S."/>
            <person name="McLaren K."/>
            <person name="Matthews L."/>
            <person name="McLaren S."/>
            <person name="Sealy I."/>
            <person name="Caccamo M."/>
            <person name="Churcher C."/>
            <person name="Scott C."/>
            <person name="Barrett J.C."/>
            <person name="Koch R."/>
            <person name="Rauch G.J."/>
            <person name="White S."/>
            <person name="Chow W."/>
            <person name="Kilian B."/>
            <person name="Quintais L.T."/>
            <person name="Guerra-Assuncao J.A."/>
            <person name="Zhou Y."/>
            <person name="Gu Y."/>
            <person name="Yen J."/>
            <person name="Vogel J.H."/>
            <person name="Eyre T."/>
            <person name="Redmond S."/>
            <person name="Banerjee R."/>
            <person name="Chi J."/>
            <person name="Fu B."/>
            <person name="Langley E."/>
            <person name="Maguire S.F."/>
            <person name="Laird G.K."/>
            <person name="Lloyd D."/>
            <person name="Kenyon E."/>
            <person name="Donaldson S."/>
            <person name="Sehra H."/>
            <person name="Almeida-King J."/>
            <person name="Loveland J."/>
            <person name="Trevanion S."/>
            <person name="Jones M."/>
            <person name="Quail M."/>
            <person name="Willey D."/>
            <person name="Hunt A."/>
            <person name="Burton J."/>
            <person name="Sims S."/>
            <person name="McLay K."/>
            <person name="Plumb B."/>
            <person name="Davis J."/>
            <person name="Clee C."/>
            <person name="Oliver K."/>
            <person name="Clark R."/>
            <person name="Riddle C."/>
            <person name="Elliot D."/>
            <person name="Threadgold G."/>
            <person name="Harden G."/>
            <person name="Ware D."/>
            <person name="Begum S."/>
            <person name="Mortimore B."/>
            <person name="Kerry G."/>
            <person name="Heath P."/>
            <person name="Phillimore B."/>
            <person name="Tracey A."/>
            <person name="Corby N."/>
            <person name="Dunn M."/>
            <person name="Johnson C."/>
            <person name="Wood J."/>
            <person name="Clark S."/>
            <person name="Pelan S."/>
            <person name="Griffiths G."/>
            <person name="Smith M."/>
            <person name="Glithero R."/>
            <person name="Howden P."/>
            <person name="Barker N."/>
            <person name="Lloyd C."/>
            <person name="Stevens C."/>
            <person name="Harley J."/>
            <person name="Holt K."/>
            <person name="Panagiotidis G."/>
            <person name="Lovell J."/>
            <person name="Beasley H."/>
            <person name="Henderson C."/>
            <person name="Gordon D."/>
            <person name="Auger K."/>
            <person name="Wright D."/>
            <person name="Collins J."/>
            <person name="Raisen C."/>
            <person name="Dyer L."/>
            <person name="Leung K."/>
            <person name="Robertson L."/>
            <person name="Ambridge K."/>
            <person name="Leongamornlert D."/>
            <person name="McGuire S."/>
            <person name="Gilderthorp R."/>
            <person name="Griffiths C."/>
            <person name="Manthravadi D."/>
            <person name="Nichol S."/>
            <person name="Barker G."/>
            <person name="Whitehead S."/>
            <person name="Kay M."/>
            <person name="Brown J."/>
            <person name="Murnane C."/>
            <person name="Gray E."/>
            <person name="Humphries M."/>
            <person name="Sycamore N."/>
            <person name="Barker D."/>
            <person name="Saunders D."/>
            <person name="Wallis J."/>
            <person name="Babbage A."/>
            <person name="Hammond S."/>
            <person name="Mashreghi-Mohammadi M."/>
            <person name="Barr L."/>
            <person name="Martin S."/>
            <person name="Wray P."/>
            <person name="Ellington A."/>
            <person name="Matthews N."/>
            <person name="Ellwood M."/>
            <person name="Woodmansey R."/>
            <person name="Clark G."/>
            <person name="Cooper J."/>
            <person name="Tromans A."/>
            <person name="Grafham D."/>
            <person name="Skuce C."/>
            <person name="Pandian R."/>
            <person name="Andrews R."/>
            <person name="Harrison E."/>
            <person name="Kimberley A."/>
            <person name="Garnett J."/>
            <person name="Fosker N."/>
            <person name="Hall R."/>
            <person name="Garner P."/>
            <person name="Kelly D."/>
            <person name="Bird C."/>
            <person name="Palmer S."/>
            <person name="Gehring I."/>
            <person name="Berger A."/>
            <person name="Dooley C.M."/>
            <person name="Ersan-Urun Z."/>
            <person name="Eser C."/>
            <person name="Geiger H."/>
            <person name="Geisler M."/>
            <person name="Karotki L."/>
            <person name="Kirn A."/>
            <person name="Konantz J."/>
            <person name="Konantz M."/>
            <person name="Oberlander M."/>
            <person name="Rudolph-Geiger S."/>
            <person name="Teucke M."/>
            <person name="Lanz C."/>
            <person name="Raddatz G."/>
            <person name="Osoegawa K."/>
            <person name="Zhu B."/>
            <person name="Rapp A."/>
            <person name="Widaa S."/>
            <person name="Langford C."/>
            <person name="Yang F."/>
            <person name="Schuster S.C."/>
            <person name="Carter N.P."/>
            <person name="Harrow J."/>
            <person name="Ning Z."/>
            <person name="Herrero J."/>
            <person name="Searle S.M."/>
            <person name="Enright A."/>
            <person name="Geisler R."/>
            <person name="Plasterk R.H."/>
            <person name="Lee C."/>
            <person name="Westerfield M."/>
            <person name="de Jong P.J."/>
            <person name="Zon L.I."/>
            <person name="Postlethwait J.H."/>
            <person name="Nusslein-Volhard C."/>
            <person name="Hubbard T.J."/>
            <person name="Roest Crollius H."/>
            <person name="Rogers J."/>
            <person name="Stemple D.L."/>
        </authorList>
    </citation>
    <scope>NUCLEOTIDE SEQUENCE [LARGE SCALE GENOMIC DNA]</scope>
    <source>
        <strain>Tuebingen</strain>
    </source>
</reference>
<reference key="2">
    <citation type="submission" date="2008-11" db="EMBL/GenBank/DDBJ databases">
        <authorList>
            <consortium name="NIH - Zebrafish Gene Collection (ZGC) project"/>
        </authorList>
    </citation>
    <scope>NUCLEOTIDE SEQUENCE [LARGE SCALE MRNA]</scope>
</reference>
<protein>
    <recommendedName>
        <fullName>Putative helicase mov-10-B.1</fullName>
        <ecNumber>3.6.4.13</ecNumber>
    </recommendedName>
</protein>
<name>M10B1_DANRE</name>
<comment type="function">
    <text evidence="1">Probable RNA helicase. Required for RNA-mediated gene silencing by the RNA-induced silencing complex (RISC). Required for both miRNA-mediated translational repression and miRNA-mediated cleavage of complementary mRNAs by RISC (By similarity).</text>
</comment>
<comment type="catalytic activity">
    <reaction>
        <text>ATP + H2O = ADP + phosphate + H(+)</text>
        <dbReference type="Rhea" id="RHEA:13065"/>
        <dbReference type="ChEBI" id="CHEBI:15377"/>
        <dbReference type="ChEBI" id="CHEBI:15378"/>
        <dbReference type="ChEBI" id="CHEBI:30616"/>
        <dbReference type="ChEBI" id="CHEBI:43474"/>
        <dbReference type="ChEBI" id="CHEBI:456216"/>
        <dbReference type="EC" id="3.6.4.13"/>
    </reaction>
</comment>
<comment type="subcellular location">
    <subcellularLocation>
        <location evidence="1">Cytoplasm</location>
        <location evidence="1">P-body</location>
    </subcellularLocation>
</comment>
<comment type="similarity">
    <text evidence="3">Belongs to the DNA2/NAM7 helicase family. SDE3 subfamily.</text>
</comment>